<comment type="function">
    <text evidence="1">Condensation of UDP-2,3-diacylglucosamine and 2,3-diacylglucosamine-1-phosphate to form lipid A disaccharide, a precursor of lipid A, a phosphorylated glycolipid that anchors the lipopolysaccharide to the outer membrane of the cell.</text>
</comment>
<comment type="catalytic activity">
    <reaction evidence="1">
        <text>a lipid X + a UDP-2-N,3-O-bis[(3R)-3-hydroxyacyl]-alpha-D-glucosamine = a lipid A disaccharide + UDP + H(+)</text>
        <dbReference type="Rhea" id="RHEA:67828"/>
        <dbReference type="ChEBI" id="CHEBI:15378"/>
        <dbReference type="ChEBI" id="CHEBI:58223"/>
        <dbReference type="ChEBI" id="CHEBI:137748"/>
        <dbReference type="ChEBI" id="CHEBI:176338"/>
        <dbReference type="ChEBI" id="CHEBI:176343"/>
        <dbReference type="EC" id="2.4.1.182"/>
    </reaction>
</comment>
<comment type="pathway">
    <text evidence="1">Bacterial outer membrane biogenesis; LPS lipid A biosynthesis.</text>
</comment>
<comment type="similarity">
    <text evidence="1">Belongs to the LpxB family.</text>
</comment>
<sequence length="401" mass="42664">MRPAGPVPVCCRAGRLMRVFILAGEPSGDRLGGALMAGLRQLCPDVQFDGVGGPAMESEGLSSRFPMAELSIMGLVEVLPKYFHLKRRIAETAQAVLAMRPDVMITIDSPDFSLRVARLVKDASDIRTVHYVAPSVWAWRPGRADKMAKVIDHVLALLPFEPPYMERAGMECDFVGHPVVTEPEATGADIAALRTELGLGAAPVLLALPGSRRGEVERLAPVFGAALRRFLPEHPDMRVVVPVVPHVADQVAQQVAEWPGAPVLVDPRGLAPAQAAMRKRAAFAAADLALAASGTVSLELAAAGTPMVIAYKVNWLTQKIAERMVTIDTVTLVNLVSETRVVPECLGPACTPENIAARLAAVHADPAAQDAAMRLTMERLGRGGTPPGLRAAQAVLDRLPG</sequence>
<dbReference type="EC" id="2.4.1.182" evidence="1"/>
<dbReference type="EMBL" id="CP000031">
    <property type="protein sequence ID" value="AAV94960.1"/>
    <property type="molecule type" value="Genomic_DNA"/>
</dbReference>
<dbReference type="SMR" id="Q5LSU1"/>
<dbReference type="STRING" id="246200.SPO1675"/>
<dbReference type="CAZy" id="GT19">
    <property type="family name" value="Glycosyltransferase Family 19"/>
</dbReference>
<dbReference type="PaxDb" id="246200-SPO1675"/>
<dbReference type="KEGG" id="sil:SPO1675"/>
<dbReference type="eggNOG" id="COG0763">
    <property type="taxonomic scope" value="Bacteria"/>
</dbReference>
<dbReference type="HOGENOM" id="CLU_036577_3_0_5"/>
<dbReference type="OrthoDB" id="9801642at2"/>
<dbReference type="UniPathway" id="UPA00973"/>
<dbReference type="Proteomes" id="UP000001023">
    <property type="component" value="Chromosome"/>
</dbReference>
<dbReference type="GO" id="GO:0016020">
    <property type="term" value="C:membrane"/>
    <property type="evidence" value="ECO:0007669"/>
    <property type="project" value="GOC"/>
</dbReference>
<dbReference type="GO" id="GO:0008915">
    <property type="term" value="F:lipid-A-disaccharide synthase activity"/>
    <property type="evidence" value="ECO:0007669"/>
    <property type="project" value="UniProtKB-UniRule"/>
</dbReference>
<dbReference type="GO" id="GO:0005543">
    <property type="term" value="F:phospholipid binding"/>
    <property type="evidence" value="ECO:0007669"/>
    <property type="project" value="TreeGrafter"/>
</dbReference>
<dbReference type="GO" id="GO:0009245">
    <property type="term" value="P:lipid A biosynthetic process"/>
    <property type="evidence" value="ECO:0007669"/>
    <property type="project" value="UniProtKB-UniRule"/>
</dbReference>
<dbReference type="HAMAP" id="MF_00392">
    <property type="entry name" value="LpxB"/>
    <property type="match status" value="1"/>
</dbReference>
<dbReference type="InterPro" id="IPR003835">
    <property type="entry name" value="Glyco_trans_19"/>
</dbReference>
<dbReference type="NCBIfam" id="TIGR00215">
    <property type="entry name" value="lpxB"/>
    <property type="match status" value="1"/>
</dbReference>
<dbReference type="PANTHER" id="PTHR30372">
    <property type="entry name" value="LIPID-A-DISACCHARIDE SYNTHASE"/>
    <property type="match status" value="1"/>
</dbReference>
<dbReference type="PANTHER" id="PTHR30372:SF4">
    <property type="entry name" value="LIPID-A-DISACCHARIDE SYNTHASE, MITOCHONDRIAL-RELATED"/>
    <property type="match status" value="1"/>
</dbReference>
<dbReference type="Pfam" id="PF02684">
    <property type="entry name" value="LpxB"/>
    <property type="match status" value="1"/>
</dbReference>
<dbReference type="SUPFAM" id="SSF53756">
    <property type="entry name" value="UDP-Glycosyltransferase/glycogen phosphorylase"/>
    <property type="match status" value="1"/>
</dbReference>
<reference key="1">
    <citation type="journal article" date="2004" name="Nature">
        <title>Genome sequence of Silicibacter pomeroyi reveals adaptations to the marine environment.</title>
        <authorList>
            <person name="Moran M.A."/>
            <person name="Buchan A."/>
            <person name="Gonzalez J.M."/>
            <person name="Heidelberg J.F."/>
            <person name="Whitman W.B."/>
            <person name="Kiene R.P."/>
            <person name="Henriksen J.R."/>
            <person name="King G.M."/>
            <person name="Belas R."/>
            <person name="Fuqua C."/>
            <person name="Brinkac L.M."/>
            <person name="Lewis M."/>
            <person name="Johri S."/>
            <person name="Weaver B."/>
            <person name="Pai G."/>
            <person name="Eisen J.A."/>
            <person name="Rahe E."/>
            <person name="Sheldon W.M."/>
            <person name="Ye W."/>
            <person name="Miller T.R."/>
            <person name="Carlton J."/>
            <person name="Rasko D.A."/>
            <person name="Paulsen I.T."/>
            <person name="Ren Q."/>
            <person name="Daugherty S.C."/>
            <person name="DeBoy R.T."/>
            <person name="Dodson R.J."/>
            <person name="Durkin A.S."/>
            <person name="Madupu R."/>
            <person name="Nelson W.C."/>
            <person name="Sullivan S.A."/>
            <person name="Rosovitz M.J."/>
            <person name="Haft D.H."/>
            <person name="Selengut J."/>
            <person name="Ward N."/>
        </authorList>
    </citation>
    <scope>NUCLEOTIDE SEQUENCE [LARGE SCALE GENOMIC DNA]</scope>
    <source>
        <strain>ATCC 700808 / DSM 15171 / DSS-3</strain>
    </source>
</reference>
<reference key="2">
    <citation type="journal article" date="2014" name="Stand. Genomic Sci.">
        <title>An updated genome annotation for the model marine bacterium Ruegeria pomeroyi DSS-3.</title>
        <authorList>
            <person name="Rivers A.R."/>
            <person name="Smith C.B."/>
            <person name="Moran M.A."/>
        </authorList>
    </citation>
    <scope>GENOME REANNOTATION</scope>
    <source>
        <strain>ATCC 700808 / DSM 15171 / DSS-3</strain>
    </source>
</reference>
<gene>
    <name evidence="1" type="primary">lpxB</name>
    <name type="ordered locus">SPO1675</name>
</gene>
<name>LPXB_RUEPO</name>
<feature type="chain" id="PRO_0000255226" description="Lipid-A-disaccharide synthase">
    <location>
        <begin position="1"/>
        <end position="401"/>
    </location>
</feature>
<protein>
    <recommendedName>
        <fullName evidence="1">Lipid-A-disaccharide synthase</fullName>
        <ecNumber evidence="1">2.4.1.182</ecNumber>
    </recommendedName>
</protein>
<evidence type="ECO:0000255" key="1">
    <source>
        <dbReference type="HAMAP-Rule" id="MF_00392"/>
    </source>
</evidence>
<accession>Q5LSU1</accession>
<keyword id="KW-0328">Glycosyltransferase</keyword>
<keyword id="KW-0441">Lipid A biosynthesis</keyword>
<keyword id="KW-0444">Lipid biosynthesis</keyword>
<keyword id="KW-0443">Lipid metabolism</keyword>
<keyword id="KW-1185">Reference proteome</keyword>
<keyword id="KW-0808">Transferase</keyword>
<organism>
    <name type="scientific">Ruegeria pomeroyi (strain ATCC 700808 / DSM 15171 / DSS-3)</name>
    <name type="common">Silicibacter pomeroyi</name>
    <dbReference type="NCBI Taxonomy" id="246200"/>
    <lineage>
        <taxon>Bacteria</taxon>
        <taxon>Pseudomonadati</taxon>
        <taxon>Pseudomonadota</taxon>
        <taxon>Alphaproteobacteria</taxon>
        <taxon>Rhodobacterales</taxon>
        <taxon>Roseobacteraceae</taxon>
        <taxon>Ruegeria</taxon>
    </lineage>
</organism>
<proteinExistence type="inferred from homology"/>